<comment type="function">
    <text evidence="1">Catalyzes the reversible transfer of the terminal phosphate group between ATP and AMP. Plays an important role in cellular energy homeostasis and in adenine nucleotide metabolism.</text>
</comment>
<comment type="catalytic activity">
    <reaction evidence="1">
        <text>AMP + ATP = 2 ADP</text>
        <dbReference type="Rhea" id="RHEA:12973"/>
        <dbReference type="ChEBI" id="CHEBI:30616"/>
        <dbReference type="ChEBI" id="CHEBI:456215"/>
        <dbReference type="ChEBI" id="CHEBI:456216"/>
        <dbReference type="EC" id="2.7.4.3"/>
    </reaction>
</comment>
<comment type="pathway">
    <text evidence="1">Purine metabolism; AMP biosynthesis via salvage pathway; AMP from ADP: step 1/1.</text>
</comment>
<comment type="subunit">
    <text evidence="1">Monomer.</text>
</comment>
<comment type="subcellular location">
    <subcellularLocation>
        <location evidence="1">Cytoplasm</location>
    </subcellularLocation>
</comment>
<comment type="domain">
    <text evidence="1">Consists of three domains, a large central CORE domain and two small peripheral domains, NMPbind and LID, which undergo movements during catalysis. The LID domain closes over the site of phosphoryl transfer upon ATP binding. Assembling and dissambling the active center during each catalytic cycle provides an effective means to prevent ATP hydrolysis. Some bacteria have evolved a zinc-coordinating structure that stabilizes the LID domain.</text>
</comment>
<comment type="similarity">
    <text evidence="1">Belongs to the adenylate kinase family.</text>
</comment>
<dbReference type="EC" id="2.7.4.3" evidence="1"/>
<dbReference type="EMBL" id="CP001074">
    <property type="protein sequence ID" value="ACE90740.1"/>
    <property type="molecule type" value="Genomic_DNA"/>
</dbReference>
<dbReference type="SMR" id="B3PWU2"/>
<dbReference type="KEGG" id="rec:RHECIAT_CH0001770"/>
<dbReference type="eggNOG" id="COG0563">
    <property type="taxonomic scope" value="Bacteria"/>
</dbReference>
<dbReference type="HOGENOM" id="CLU_032354_1_2_5"/>
<dbReference type="UniPathway" id="UPA00588">
    <property type="reaction ID" value="UER00649"/>
</dbReference>
<dbReference type="Proteomes" id="UP000008817">
    <property type="component" value="Chromosome"/>
</dbReference>
<dbReference type="GO" id="GO:0005737">
    <property type="term" value="C:cytoplasm"/>
    <property type="evidence" value="ECO:0007669"/>
    <property type="project" value="UniProtKB-SubCell"/>
</dbReference>
<dbReference type="GO" id="GO:0004017">
    <property type="term" value="F:adenylate kinase activity"/>
    <property type="evidence" value="ECO:0007669"/>
    <property type="project" value="UniProtKB-UniRule"/>
</dbReference>
<dbReference type="GO" id="GO:0005524">
    <property type="term" value="F:ATP binding"/>
    <property type="evidence" value="ECO:0007669"/>
    <property type="project" value="UniProtKB-UniRule"/>
</dbReference>
<dbReference type="GO" id="GO:0008270">
    <property type="term" value="F:zinc ion binding"/>
    <property type="evidence" value="ECO:0007669"/>
    <property type="project" value="UniProtKB-UniRule"/>
</dbReference>
<dbReference type="GO" id="GO:0044209">
    <property type="term" value="P:AMP salvage"/>
    <property type="evidence" value="ECO:0007669"/>
    <property type="project" value="UniProtKB-UniRule"/>
</dbReference>
<dbReference type="CDD" id="cd01428">
    <property type="entry name" value="ADK"/>
    <property type="match status" value="1"/>
</dbReference>
<dbReference type="FunFam" id="3.40.50.300:FF:000106">
    <property type="entry name" value="Adenylate kinase mitochondrial"/>
    <property type="match status" value="1"/>
</dbReference>
<dbReference type="Gene3D" id="3.40.50.300">
    <property type="entry name" value="P-loop containing nucleotide triphosphate hydrolases"/>
    <property type="match status" value="1"/>
</dbReference>
<dbReference type="HAMAP" id="MF_00235">
    <property type="entry name" value="Adenylate_kinase_Adk"/>
    <property type="match status" value="1"/>
</dbReference>
<dbReference type="InterPro" id="IPR006259">
    <property type="entry name" value="Adenyl_kin_sub"/>
</dbReference>
<dbReference type="InterPro" id="IPR000850">
    <property type="entry name" value="Adenylat/UMP-CMP_kin"/>
</dbReference>
<dbReference type="InterPro" id="IPR033690">
    <property type="entry name" value="Adenylat_kinase_CS"/>
</dbReference>
<dbReference type="InterPro" id="IPR007862">
    <property type="entry name" value="Adenylate_kinase_lid-dom"/>
</dbReference>
<dbReference type="InterPro" id="IPR027417">
    <property type="entry name" value="P-loop_NTPase"/>
</dbReference>
<dbReference type="NCBIfam" id="TIGR01351">
    <property type="entry name" value="adk"/>
    <property type="match status" value="1"/>
</dbReference>
<dbReference type="NCBIfam" id="NF001380">
    <property type="entry name" value="PRK00279.1-2"/>
    <property type="match status" value="1"/>
</dbReference>
<dbReference type="NCBIfam" id="NF001381">
    <property type="entry name" value="PRK00279.1-3"/>
    <property type="match status" value="1"/>
</dbReference>
<dbReference type="NCBIfam" id="NF011100">
    <property type="entry name" value="PRK14527.1"/>
    <property type="match status" value="1"/>
</dbReference>
<dbReference type="NCBIfam" id="NF011105">
    <property type="entry name" value="PRK14532.1"/>
    <property type="match status" value="1"/>
</dbReference>
<dbReference type="PANTHER" id="PTHR23359">
    <property type="entry name" value="NUCLEOTIDE KINASE"/>
    <property type="match status" value="1"/>
</dbReference>
<dbReference type="Pfam" id="PF00406">
    <property type="entry name" value="ADK"/>
    <property type="match status" value="1"/>
</dbReference>
<dbReference type="Pfam" id="PF05191">
    <property type="entry name" value="ADK_lid"/>
    <property type="match status" value="1"/>
</dbReference>
<dbReference type="PRINTS" id="PR00094">
    <property type="entry name" value="ADENYLTKNASE"/>
</dbReference>
<dbReference type="SUPFAM" id="SSF52540">
    <property type="entry name" value="P-loop containing nucleoside triphosphate hydrolases"/>
    <property type="match status" value="1"/>
</dbReference>
<dbReference type="PROSITE" id="PS00113">
    <property type="entry name" value="ADENYLATE_KINASE"/>
    <property type="match status" value="1"/>
</dbReference>
<name>KAD_RHIE6</name>
<protein>
    <recommendedName>
        <fullName evidence="1">Adenylate kinase</fullName>
        <shortName evidence="1">AK</shortName>
        <ecNumber evidence="1">2.7.4.3</ecNumber>
    </recommendedName>
    <alternativeName>
        <fullName evidence="1">ATP-AMP transphosphorylase</fullName>
    </alternativeName>
    <alternativeName>
        <fullName evidence="1">ATP:AMP phosphotransferase</fullName>
    </alternativeName>
    <alternativeName>
        <fullName evidence="1">Adenylate monophosphate kinase</fullName>
    </alternativeName>
</protein>
<feature type="chain" id="PRO_1000100598" description="Adenylate kinase">
    <location>
        <begin position="1"/>
        <end position="216"/>
    </location>
</feature>
<feature type="region of interest" description="NMP" evidence="1">
    <location>
        <begin position="30"/>
        <end position="59"/>
    </location>
</feature>
<feature type="region of interest" description="LID" evidence="1">
    <location>
        <begin position="126"/>
        <end position="163"/>
    </location>
</feature>
<feature type="binding site" evidence="1">
    <location>
        <begin position="10"/>
        <end position="15"/>
    </location>
    <ligand>
        <name>ATP</name>
        <dbReference type="ChEBI" id="CHEBI:30616"/>
    </ligand>
</feature>
<feature type="binding site" evidence="1">
    <location>
        <position position="31"/>
    </location>
    <ligand>
        <name>AMP</name>
        <dbReference type="ChEBI" id="CHEBI:456215"/>
    </ligand>
</feature>
<feature type="binding site" evidence="1">
    <location>
        <position position="36"/>
    </location>
    <ligand>
        <name>AMP</name>
        <dbReference type="ChEBI" id="CHEBI:456215"/>
    </ligand>
</feature>
<feature type="binding site" evidence="1">
    <location>
        <begin position="57"/>
        <end position="59"/>
    </location>
    <ligand>
        <name>AMP</name>
        <dbReference type="ChEBI" id="CHEBI:456215"/>
    </ligand>
</feature>
<feature type="binding site" evidence="1">
    <location>
        <begin position="85"/>
        <end position="88"/>
    </location>
    <ligand>
        <name>AMP</name>
        <dbReference type="ChEBI" id="CHEBI:456215"/>
    </ligand>
</feature>
<feature type="binding site" evidence="1">
    <location>
        <position position="92"/>
    </location>
    <ligand>
        <name>AMP</name>
        <dbReference type="ChEBI" id="CHEBI:456215"/>
    </ligand>
</feature>
<feature type="binding site" evidence="1">
    <location>
        <position position="127"/>
    </location>
    <ligand>
        <name>ATP</name>
        <dbReference type="ChEBI" id="CHEBI:30616"/>
    </ligand>
</feature>
<feature type="binding site" evidence="1">
    <location>
        <position position="130"/>
    </location>
    <ligand>
        <name>Zn(2+)</name>
        <dbReference type="ChEBI" id="CHEBI:29105"/>
        <note>structural</note>
    </ligand>
</feature>
<feature type="binding site" evidence="1">
    <location>
        <position position="133"/>
    </location>
    <ligand>
        <name>Zn(2+)</name>
        <dbReference type="ChEBI" id="CHEBI:29105"/>
        <note>structural</note>
    </ligand>
</feature>
<feature type="binding site" evidence="1">
    <location>
        <begin position="136"/>
        <end position="137"/>
    </location>
    <ligand>
        <name>ATP</name>
        <dbReference type="ChEBI" id="CHEBI:30616"/>
    </ligand>
</feature>
<feature type="binding site" evidence="1">
    <location>
        <position position="150"/>
    </location>
    <ligand>
        <name>Zn(2+)</name>
        <dbReference type="ChEBI" id="CHEBI:29105"/>
        <note>structural</note>
    </ligand>
</feature>
<feature type="binding site" evidence="1">
    <location>
        <position position="153"/>
    </location>
    <ligand>
        <name>Zn(2+)</name>
        <dbReference type="ChEBI" id="CHEBI:29105"/>
        <note>structural</note>
    </ligand>
</feature>
<feature type="binding site" evidence="1">
    <location>
        <position position="160"/>
    </location>
    <ligand>
        <name>AMP</name>
        <dbReference type="ChEBI" id="CHEBI:456215"/>
    </ligand>
</feature>
<feature type="binding site" evidence="1">
    <location>
        <position position="172"/>
    </location>
    <ligand>
        <name>AMP</name>
        <dbReference type="ChEBI" id="CHEBI:456215"/>
    </ligand>
</feature>
<feature type="binding site" evidence="1">
    <location>
        <position position="200"/>
    </location>
    <ligand>
        <name>ATP</name>
        <dbReference type="ChEBI" id="CHEBI:30616"/>
    </ligand>
</feature>
<sequence length="216" mass="23634">MRLILLGPPGAGKGTQAQRIVEKHGIPQLSTGDMLRAAVGVGTEVGKRAKAVMDAGKLVSDEIVIAIVSERIDQPDCANGFILDGFPRTLVQADATEAMLKAKGLDLSVVIEFRVDDQELVRRVDGRYTCAQCGTVYHDTDKVPVEEGVCDKCGSTHFKRRPDDNAETMIKRLEVYYKETSPLIGYYYAKGKLRSVDGMAEIDQVTTEVESILSKL</sequence>
<accession>B3PWU2</accession>
<proteinExistence type="inferred from homology"/>
<evidence type="ECO:0000255" key="1">
    <source>
        <dbReference type="HAMAP-Rule" id="MF_00235"/>
    </source>
</evidence>
<keyword id="KW-0067">ATP-binding</keyword>
<keyword id="KW-0963">Cytoplasm</keyword>
<keyword id="KW-0418">Kinase</keyword>
<keyword id="KW-0479">Metal-binding</keyword>
<keyword id="KW-0545">Nucleotide biosynthesis</keyword>
<keyword id="KW-0547">Nucleotide-binding</keyword>
<keyword id="KW-0808">Transferase</keyword>
<keyword id="KW-0862">Zinc</keyword>
<reference key="1">
    <citation type="journal article" date="2010" name="Appl. Environ. Microbiol.">
        <title>Conserved symbiotic plasmid DNA sequences in the multireplicon pangenomic structure of Rhizobium etli.</title>
        <authorList>
            <person name="Gonzalez V."/>
            <person name="Acosta J.L."/>
            <person name="Santamaria R.I."/>
            <person name="Bustos P."/>
            <person name="Fernandez J.L."/>
            <person name="Hernandez Gonzalez I.L."/>
            <person name="Diaz R."/>
            <person name="Flores M."/>
            <person name="Palacios R."/>
            <person name="Mora J."/>
            <person name="Davila G."/>
        </authorList>
    </citation>
    <scope>NUCLEOTIDE SEQUENCE [LARGE SCALE GENOMIC DNA]</scope>
    <source>
        <strain>CIAT 652</strain>
    </source>
</reference>
<organism>
    <name type="scientific">Rhizobium etli (strain CIAT 652)</name>
    <dbReference type="NCBI Taxonomy" id="491916"/>
    <lineage>
        <taxon>Bacteria</taxon>
        <taxon>Pseudomonadati</taxon>
        <taxon>Pseudomonadota</taxon>
        <taxon>Alphaproteobacteria</taxon>
        <taxon>Hyphomicrobiales</taxon>
        <taxon>Rhizobiaceae</taxon>
        <taxon>Rhizobium/Agrobacterium group</taxon>
        <taxon>Rhizobium</taxon>
    </lineage>
</organism>
<gene>
    <name evidence="1" type="primary">adk</name>
    <name type="ordered locus">RHECIAT_CH0001770</name>
</gene>